<evidence type="ECO:0000250" key="1">
    <source>
        <dbReference type="UniProtKB" id="Q28641"/>
    </source>
</evidence>
<evidence type="ECO:0000250" key="2">
    <source>
        <dbReference type="UniProtKB" id="Q29RW1"/>
    </source>
</evidence>
<evidence type="ECO:0000255" key="3"/>
<evidence type="ECO:0000255" key="4">
    <source>
        <dbReference type="PROSITE-ProRule" id="PRU00116"/>
    </source>
</evidence>
<evidence type="ECO:0000255" key="5">
    <source>
        <dbReference type="PROSITE-ProRule" id="PRU00782"/>
    </source>
</evidence>
<evidence type="ECO:0000255" key="6">
    <source>
        <dbReference type="PROSITE-ProRule" id="PRU01190"/>
    </source>
</evidence>
<evidence type="ECO:0000256" key="7">
    <source>
        <dbReference type="SAM" id="MobiDB-lite"/>
    </source>
</evidence>
<evidence type="ECO:0000269" key="8">
    <source>
    </source>
</evidence>
<evidence type="ECO:0000269" key="9">
    <source>
    </source>
</evidence>
<evidence type="ECO:0000269" key="10">
    <source>
    </source>
</evidence>
<evidence type="ECO:0000269" key="11">
    <source>
    </source>
</evidence>
<evidence type="ECO:0000305" key="12"/>
<keyword id="KW-0009">Actin-binding</keyword>
<keyword id="KW-0067">ATP-binding</keyword>
<keyword id="KW-0112">Calmodulin-binding</keyword>
<keyword id="KW-0175">Coiled coil</keyword>
<keyword id="KW-0963">Cytoplasm</keyword>
<keyword id="KW-0225">Disease variant</keyword>
<keyword id="KW-0488">Methylation</keyword>
<keyword id="KW-0505">Motor protein</keyword>
<keyword id="KW-0514">Muscle protein</keyword>
<keyword id="KW-0518">Myosin</keyword>
<keyword id="KW-0547">Nucleotide-binding</keyword>
<keyword id="KW-0597">Phosphoprotein</keyword>
<keyword id="KW-1267">Proteomics identification</keyword>
<keyword id="KW-1185">Reference proteome</keyword>
<keyword id="KW-0787">Thick filament</keyword>
<protein>
    <recommendedName>
        <fullName>Myosin-8</fullName>
    </recommendedName>
    <alternativeName>
        <fullName>Myosin heavy chain 8</fullName>
    </alternativeName>
    <alternativeName>
        <fullName>Myosin heavy chain, skeletal muscle, perinatal</fullName>
        <shortName>MyHC-perinatal</shortName>
    </alternativeName>
</protein>
<feature type="chain" id="PRO_0000123413" description="Myosin-8">
    <location>
        <begin position="1"/>
        <end position="1937"/>
    </location>
</feature>
<feature type="domain" description="Myosin N-terminal SH3-like" evidence="6">
    <location>
        <begin position="35"/>
        <end position="84"/>
    </location>
</feature>
<feature type="domain" description="Myosin motor" evidence="5">
    <location>
        <begin position="88"/>
        <end position="781"/>
    </location>
</feature>
<feature type="domain" description="IQ" evidence="4">
    <location>
        <begin position="781"/>
        <end position="813"/>
    </location>
</feature>
<feature type="region of interest" description="Actin-binding">
    <location>
        <begin position="658"/>
        <end position="680"/>
    </location>
</feature>
<feature type="region of interest" description="Actin-binding">
    <location>
        <begin position="760"/>
        <end position="774"/>
    </location>
</feature>
<feature type="region of interest" description="Disordered" evidence="7">
    <location>
        <begin position="1126"/>
        <end position="1146"/>
    </location>
</feature>
<feature type="coiled-coil region" evidence="3">
    <location>
        <begin position="842"/>
        <end position="1937"/>
    </location>
</feature>
<feature type="compositionally biased region" description="Basic and acidic residues" evidence="7">
    <location>
        <begin position="1127"/>
        <end position="1146"/>
    </location>
</feature>
<feature type="binding site">
    <location>
        <begin position="181"/>
        <end position="188"/>
    </location>
    <ligand>
        <name>ATP</name>
        <dbReference type="ChEBI" id="CHEBI:30616"/>
    </ligand>
</feature>
<feature type="modified residue" description="Phosphothreonine" evidence="2">
    <location>
        <position position="66"/>
    </location>
</feature>
<feature type="modified residue" description="Phosphothreonine" evidence="2">
    <location>
        <position position="71"/>
    </location>
</feature>
<feature type="modified residue" description="N6,N6,N6-trimethyllysine" evidence="3">
    <location>
        <position position="132"/>
    </location>
</feature>
<feature type="modified residue" description="Phosphotyrosine" evidence="2">
    <location>
        <position position="389"/>
    </location>
</feature>
<feature type="modified residue" description="Phosphoserine" evidence="2">
    <location>
        <position position="392"/>
    </location>
</feature>
<feature type="modified residue" description="Phosphothreonine" evidence="2">
    <location>
        <position position="419"/>
    </location>
</feature>
<feature type="modified residue" description="Phosphotyrosine" evidence="2">
    <location>
        <position position="424"/>
    </location>
</feature>
<feature type="modified residue" description="Phosphoserine" evidence="2">
    <location>
        <position position="625"/>
    </location>
</feature>
<feature type="modified residue" description="Pros-methylhistidine" evidence="1">
    <location>
        <position position="756"/>
    </location>
</feature>
<feature type="modified residue" description="Phosphoserine" evidence="2">
    <location>
        <position position="1091"/>
    </location>
</feature>
<feature type="modified residue" description="Phosphoserine" evidence="2">
    <location>
        <position position="1095"/>
    </location>
</feature>
<feature type="modified residue" description="Phosphoserine" evidence="2">
    <location>
        <position position="1161"/>
    </location>
</feature>
<feature type="modified residue" description="Phosphoserine" evidence="2">
    <location>
        <position position="1236"/>
    </location>
</feature>
<feature type="modified residue" description="Phosphoserine" evidence="2">
    <location>
        <position position="1242"/>
    </location>
</feature>
<feature type="modified residue" description="Phosphoserine" evidence="2">
    <location>
        <position position="1260"/>
    </location>
</feature>
<feature type="modified residue" description="Phosphothreonine" evidence="2">
    <location>
        <position position="1264"/>
    </location>
</feature>
<feature type="modified residue" description="Phosphothreonine" evidence="2">
    <location>
        <position position="1285"/>
    </location>
</feature>
<feature type="modified residue" description="Phosphoserine" evidence="2">
    <location>
        <position position="1291"/>
    </location>
</feature>
<feature type="modified residue" description="Phosphoserine" evidence="2">
    <location>
        <position position="1302"/>
    </location>
</feature>
<feature type="modified residue" description="Phosphoserine" evidence="2">
    <location>
        <position position="1305"/>
    </location>
</feature>
<feature type="modified residue" description="Phosphotyrosine" evidence="2">
    <location>
        <position position="1463"/>
    </location>
</feature>
<feature type="modified residue" description="Phosphothreonine" evidence="2">
    <location>
        <position position="1466"/>
    </location>
</feature>
<feature type="modified residue" description="Phosphoserine" evidence="2">
    <location>
        <position position="1473"/>
    </location>
</feature>
<feature type="modified residue" description="Phosphotyrosine" evidence="2">
    <location>
        <position position="1491"/>
    </location>
</feature>
<feature type="modified residue" description="Phosphoserine" evidence="2">
    <location>
        <position position="1494"/>
    </location>
</feature>
<feature type="modified residue" description="Phosphothreonine" evidence="2">
    <location>
        <position position="1500"/>
    </location>
</feature>
<feature type="modified residue" description="Phosphoserine" evidence="2">
    <location>
        <position position="1513"/>
    </location>
</feature>
<feature type="modified residue" description="Phosphothreonine" evidence="2">
    <location>
        <position position="1516"/>
    </location>
</feature>
<feature type="modified residue" description="Phosphoserine" evidence="2">
    <location>
        <position position="1553"/>
    </location>
</feature>
<feature type="modified residue" description="Phosphoserine" evidence="2">
    <location>
        <position position="1573"/>
    </location>
</feature>
<feature type="modified residue" description="Phosphoserine" evidence="2">
    <location>
        <position position="1602"/>
    </location>
</feature>
<feature type="modified residue" description="Phosphoserine" evidence="2">
    <location>
        <position position="1713"/>
    </location>
</feature>
<feature type="modified residue" description="Phosphoserine" evidence="2">
    <location>
        <position position="1725"/>
    </location>
</feature>
<feature type="modified residue" description="Phosphothreonine" evidence="2">
    <location>
        <position position="1729"/>
    </location>
</feature>
<feature type="modified residue" description="Phosphoserine" evidence="2">
    <location>
        <position position="1738"/>
    </location>
</feature>
<feature type="sequence variant" id="VAR_050202" description="In dbSNP:rs34124921.">
    <original>I</original>
    <variation>T</variation>
    <location>
        <position position="326"/>
    </location>
</feature>
<feature type="sequence variant" id="VAR_050203" description="In dbSNP:rs34693726.">
    <original>A</original>
    <variation>V</variation>
    <location>
        <position position="636"/>
    </location>
</feature>
<feature type="sequence variant" id="VAR_019810" description="In CACOV and DA7; dbSNP:rs121434590." evidence="8 9">
    <original>R</original>
    <variation>Q</variation>
    <location>
        <position position="674"/>
    </location>
</feature>
<feature type="sequence variant" id="VAR_030207" description="In dbSNP:rs4372733.">
    <original>E</original>
    <variation>G</variation>
    <location>
        <position position="924"/>
    </location>
</feature>
<feature type="sequence variant" id="VAR_050204" description="In dbSNP:rs35962914.">
    <original>M</original>
    <variation>T</variation>
    <location>
        <position position="1229"/>
    </location>
</feature>
<feature type="sequence variant" id="VAR_030208" description="In dbSNP:rs1063926." evidence="10 11">
    <original>E</original>
    <variation>G</variation>
    <location>
        <position position="1261"/>
    </location>
</feature>
<feature type="sequence variant" id="VAR_030209" description="In dbSNP:rs8069834.">
    <original>W</original>
    <variation>R</variation>
    <location>
        <position position="1692"/>
    </location>
</feature>
<feature type="sequence conflict" description="In Ref. 2; CAA86293." evidence="12" ref="2">
    <original>A</original>
    <variation>R</variation>
    <location>
        <position position="15"/>
    </location>
</feature>
<feature type="sequence conflict" description="In Ref. 1 and 4." evidence="12" ref="1 4">
    <original>E</original>
    <variation>Q</variation>
    <location>
        <position position="970"/>
    </location>
</feature>
<feature type="sequence conflict" description="In Ref. 3; CAA35941." evidence="12" ref="3">
    <original>M</original>
    <variation>N</variation>
    <location>
        <position position="1072"/>
    </location>
</feature>
<feature type="sequence conflict" description="In Ref. 1 and 4." evidence="12" ref="1 4">
    <original>N</original>
    <variation>H</variation>
    <location>
        <position position="1247"/>
    </location>
</feature>
<feature type="sequence conflict" description="In Ref. 3; CAA35941." evidence="12" ref="3">
    <original>MC</original>
    <variation>DGG</variation>
    <location>
        <begin position="1251"/>
        <end position="1252"/>
    </location>
</feature>
<feature type="sequence conflict" description="In Ref. 1 and 4." evidence="12" ref="1 4">
    <original>K</original>
    <variation>Q</variation>
    <location>
        <position position="1297"/>
    </location>
</feature>
<feature type="sequence conflict" description="In Ref. 3; CAA35941." evidence="12" ref="3">
    <original>KY</original>
    <variation>NT</variation>
    <location>
        <begin position="1377"/>
        <end position="1378"/>
    </location>
</feature>
<feature type="sequence conflict" description="In Ref. 1 and 4." evidence="12" ref="1 4">
    <original>EN</original>
    <variation>AH</variation>
    <location>
        <begin position="1504"/>
        <end position="1505"/>
    </location>
</feature>
<feature type="sequence conflict" description="In Ref. 1 and 4." evidence="12" ref="1 4">
    <original>E</original>
    <variation>D</variation>
    <location>
        <position position="1847"/>
    </location>
</feature>
<feature type="sequence conflict" description="In Ref. 2; CAA86293." evidence="12" ref="2">
    <original>D</original>
    <variation>H</variation>
    <location>
        <position position="1914"/>
    </location>
</feature>
<name>MYH8_HUMAN</name>
<accession>P13535</accession>
<accession>Q14910</accession>
<proteinExistence type="evidence at protein level"/>
<organism>
    <name type="scientific">Homo sapiens</name>
    <name type="common">Human</name>
    <dbReference type="NCBI Taxonomy" id="9606"/>
    <lineage>
        <taxon>Eukaryota</taxon>
        <taxon>Metazoa</taxon>
        <taxon>Chordata</taxon>
        <taxon>Craniata</taxon>
        <taxon>Vertebrata</taxon>
        <taxon>Euteleostomi</taxon>
        <taxon>Mammalia</taxon>
        <taxon>Eutheria</taxon>
        <taxon>Euarchontoglires</taxon>
        <taxon>Primates</taxon>
        <taxon>Haplorrhini</taxon>
        <taxon>Catarrhini</taxon>
        <taxon>Hominidae</taxon>
        <taxon>Homo</taxon>
    </lineage>
</organism>
<dbReference type="EMBL" id="M36769">
    <property type="protein sequence ID" value="AAC17185.1"/>
    <property type="molecule type" value="mRNA"/>
</dbReference>
<dbReference type="EMBL" id="Z38133">
    <property type="protein sequence ID" value="CAA86293.1"/>
    <property type="molecule type" value="mRNA"/>
</dbReference>
<dbReference type="EMBL" id="X51592">
    <property type="protein sequence ID" value="CAA35941.1"/>
    <property type="molecule type" value="mRNA"/>
</dbReference>
<dbReference type="EMBL" id="AF067143">
    <property type="protein sequence ID" value="AAC21557.1"/>
    <property type="molecule type" value="Genomic_DNA"/>
</dbReference>
<dbReference type="CCDS" id="CCDS11153.1"/>
<dbReference type="PIR" id="I38055">
    <property type="entry name" value="I38055"/>
</dbReference>
<dbReference type="RefSeq" id="NP_002463.2">
    <property type="nucleotide sequence ID" value="NM_002472.3"/>
</dbReference>
<dbReference type="RefSeq" id="XP_054172212.1">
    <property type="nucleotide sequence ID" value="XM_054316237.1"/>
</dbReference>
<dbReference type="SMR" id="P13535"/>
<dbReference type="BioGRID" id="110711">
    <property type="interactions" value="52"/>
</dbReference>
<dbReference type="FunCoup" id="P13535">
    <property type="interactions" value="391"/>
</dbReference>
<dbReference type="IntAct" id="P13535">
    <property type="interactions" value="31"/>
</dbReference>
<dbReference type="STRING" id="9606.ENSP00000384330"/>
<dbReference type="iPTMnet" id="P13535"/>
<dbReference type="PhosphoSitePlus" id="P13535"/>
<dbReference type="BioMuta" id="MYH8"/>
<dbReference type="DMDM" id="3041707"/>
<dbReference type="jPOST" id="P13535"/>
<dbReference type="MassIVE" id="P13535"/>
<dbReference type="PaxDb" id="9606-ENSP00000384330"/>
<dbReference type="PeptideAtlas" id="P13535"/>
<dbReference type="ProteomicsDB" id="52925"/>
<dbReference type="Pumba" id="P13535"/>
<dbReference type="Antibodypedia" id="4295">
    <property type="antibodies" value="67 antibodies from 20 providers"/>
</dbReference>
<dbReference type="DNASU" id="4626"/>
<dbReference type="Ensembl" id="ENST00000403437.2">
    <property type="protein sequence ID" value="ENSP00000384330.2"/>
    <property type="gene ID" value="ENSG00000133020.4"/>
</dbReference>
<dbReference type="GeneID" id="4626"/>
<dbReference type="KEGG" id="hsa:4626"/>
<dbReference type="MANE-Select" id="ENST00000403437.2">
    <property type="protein sequence ID" value="ENSP00000384330.2"/>
    <property type="RefSeq nucleotide sequence ID" value="NM_002472.3"/>
    <property type="RefSeq protein sequence ID" value="NP_002463.2"/>
</dbReference>
<dbReference type="UCSC" id="uc002gmm.3">
    <property type="organism name" value="human"/>
</dbReference>
<dbReference type="AGR" id="HGNC:7578"/>
<dbReference type="CTD" id="4626"/>
<dbReference type="DisGeNET" id="4626"/>
<dbReference type="GeneCards" id="MYH8"/>
<dbReference type="HGNC" id="HGNC:7578">
    <property type="gene designation" value="MYH8"/>
</dbReference>
<dbReference type="HPA" id="ENSG00000133020">
    <property type="expression patterns" value="Group enriched (esophagus, lymphoid tissue, skeletal muscle, tongue)"/>
</dbReference>
<dbReference type="MalaCards" id="MYH8"/>
<dbReference type="MIM" id="158300">
    <property type="type" value="phenotype"/>
</dbReference>
<dbReference type="MIM" id="160741">
    <property type="type" value="gene"/>
</dbReference>
<dbReference type="MIM" id="608837">
    <property type="type" value="phenotype"/>
</dbReference>
<dbReference type="neXtProt" id="NX_P13535"/>
<dbReference type="OpenTargets" id="ENSG00000133020"/>
<dbReference type="Orphanet" id="319340">
    <property type="disease" value="Carney complex-trismus-pseudocamptodactyly syndrome"/>
</dbReference>
<dbReference type="Orphanet" id="3377">
    <property type="disease" value="Trismus-pseudocamptodactyly syndrome"/>
</dbReference>
<dbReference type="PharmGKB" id="PA31376"/>
<dbReference type="VEuPathDB" id="HostDB:ENSG00000133020"/>
<dbReference type="eggNOG" id="KOG0161">
    <property type="taxonomic scope" value="Eukaryota"/>
</dbReference>
<dbReference type="GeneTree" id="ENSGT00940000161785"/>
<dbReference type="HOGENOM" id="CLU_000192_8_0_1"/>
<dbReference type="InParanoid" id="P13535"/>
<dbReference type="OMA" id="NITHVHT"/>
<dbReference type="OrthoDB" id="312459at2759"/>
<dbReference type="PAN-GO" id="P13535">
    <property type="GO annotations" value="6 GO annotations based on evolutionary models"/>
</dbReference>
<dbReference type="PhylomeDB" id="P13535"/>
<dbReference type="TreeFam" id="TF314375"/>
<dbReference type="PathwayCommons" id="P13535"/>
<dbReference type="Reactome" id="R-HSA-390522">
    <property type="pathway name" value="Striated Muscle Contraction"/>
</dbReference>
<dbReference type="SignaLink" id="P13535"/>
<dbReference type="BioGRID-ORCS" id="4626">
    <property type="hits" value="10 hits in 1150 CRISPR screens"/>
</dbReference>
<dbReference type="ChiTaRS" id="MYH8">
    <property type="organism name" value="human"/>
</dbReference>
<dbReference type="GeneWiki" id="MYH8"/>
<dbReference type="GenomeRNAi" id="4626"/>
<dbReference type="Pharos" id="P13535">
    <property type="development level" value="Tbio"/>
</dbReference>
<dbReference type="PRO" id="PR:P13535"/>
<dbReference type="Proteomes" id="UP000005640">
    <property type="component" value="Chromosome 17"/>
</dbReference>
<dbReference type="RNAct" id="P13535">
    <property type="molecule type" value="protein"/>
</dbReference>
<dbReference type="Bgee" id="ENSG00000133020">
    <property type="expression patterns" value="Expressed in vastus lateralis and 48 other cell types or tissues"/>
</dbReference>
<dbReference type="GO" id="GO:0005737">
    <property type="term" value="C:cytoplasm"/>
    <property type="evidence" value="ECO:0000314"/>
    <property type="project" value="BHF-UCL"/>
</dbReference>
<dbReference type="GO" id="GO:0005829">
    <property type="term" value="C:cytosol"/>
    <property type="evidence" value="ECO:0000304"/>
    <property type="project" value="Reactome"/>
</dbReference>
<dbReference type="GO" id="GO:0005859">
    <property type="term" value="C:muscle myosin complex"/>
    <property type="evidence" value="ECO:0000303"/>
    <property type="project" value="UniProtKB"/>
</dbReference>
<dbReference type="GO" id="GO:0032982">
    <property type="term" value="C:myosin filament"/>
    <property type="evidence" value="ECO:0000318"/>
    <property type="project" value="GO_Central"/>
</dbReference>
<dbReference type="GO" id="GO:0016460">
    <property type="term" value="C:myosin II complex"/>
    <property type="evidence" value="ECO:0000318"/>
    <property type="project" value="GO_Central"/>
</dbReference>
<dbReference type="GO" id="GO:0030017">
    <property type="term" value="C:sarcomere"/>
    <property type="evidence" value="ECO:0000305"/>
    <property type="project" value="BHF-UCL"/>
</dbReference>
<dbReference type="GO" id="GO:0051015">
    <property type="term" value="F:actin filament binding"/>
    <property type="evidence" value="ECO:0000318"/>
    <property type="project" value="GO_Central"/>
</dbReference>
<dbReference type="GO" id="GO:0005524">
    <property type="term" value="F:ATP binding"/>
    <property type="evidence" value="ECO:0000315"/>
    <property type="project" value="BHF-UCL"/>
</dbReference>
<dbReference type="GO" id="GO:0016887">
    <property type="term" value="F:ATP hydrolysis activity"/>
    <property type="evidence" value="ECO:0000315"/>
    <property type="project" value="BHF-UCL"/>
</dbReference>
<dbReference type="GO" id="GO:0005516">
    <property type="term" value="F:calmodulin binding"/>
    <property type="evidence" value="ECO:0007669"/>
    <property type="project" value="UniProtKB-KW"/>
</dbReference>
<dbReference type="GO" id="GO:0000146">
    <property type="term" value="F:microfilament motor activity"/>
    <property type="evidence" value="ECO:0000315"/>
    <property type="project" value="BHF-UCL"/>
</dbReference>
<dbReference type="GO" id="GO:0032027">
    <property type="term" value="F:myosin light chain binding"/>
    <property type="evidence" value="ECO:0000304"/>
    <property type="project" value="BHF-UCL"/>
</dbReference>
<dbReference type="GO" id="GO:0017018">
    <property type="term" value="F:myosin phosphatase activity"/>
    <property type="evidence" value="ECO:0000304"/>
    <property type="project" value="Reactome"/>
</dbReference>
<dbReference type="GO" id="GO:0008307">
    <property type="term" value="F:structural constituent of muscle"/>
    <property type="evidence" value="ECO:0000303"/>
    <property type="project" value="UniProtKB"/>
</dbReference>
<dbReference type="GO" id="GO:0046034">
    <property type="term" value="P:ATP metabolic process"/>
    <property type="evidence" value="ECO:0000315"/>
    <property type="project" value="BHF-UCL"/>
</dbReference>
<dbReference type="GO" id="GO:0006936">
    <property type="term" value="P:muscle contraction"/>
    <property type="evidence" value="ECO:0000318"/>
    <property type="project" value="GO_Central"/>
</dbReference>
<dbReference type="GO" id="GO:0030049">
    <property type="term" value="P:muscle filament sliding"/>
    <property type="evidence" value="ECO:0000315"/>
    <property type="project" value="BHF-UCL"/>
</dbReference>
<dbReference type="GO" id="GO:0003009">
    <property type="term" value="P:skeletal muscle contraction"/>
    <property type="evidence" value="ECO:0000315"/>
    <property type="project" value="BHF-UCL"/>
</dbReference>
<dbReference type="CDD" id="cd14918">
    <property type="entry name" value="MYSc_Myh8"/>
    <property type="match status" value="1"/>
</dbReference>
<dbReference type="FunFam" id="1.10.10.820:FF:000001">
    <property type="entry name" value="Myosin heavy chain"/>
    <property type="match status" value="1"/>
</dbReference>
<dbReference type="FunFam" id="1.20.5.340:FF:000002">
    <property type="entry name" value="Myosin heavy chain"/>
    <property type="match status" value="1"/>
</dbReference>
<dbReference type="FunFam" id="1.20.5.340:FF:000003">
    <property type="entry name" value="Myosin heavy chain"/>
    <property type="match status" value="1"/>
</dbReference>
<dbReference type="FunFam" id="1.20.5.340:FF:000004">
    <property type="entry name" value="Myosin heavy chain"/>
    <property type="match status" value="1"/>
</dbReference>
<dbReference type="FunFam" id="1.20.5.340:FF:000006">
    <property type="entry name" value="Myosin heavy chain"/>
    <property type="match status" value="1"/>
</dbReference>
<dbReference type="FunFam" id="1.20.5.340:FF:000013">
    <property type="entry name" value="Myosin heavy chain"/>
    <property type="match status" value="1"/>
</dbReference>
<dbReference type="FunFam" id="1.20.5.370:FF:000001">
    <property type="entry name" value="Myosin heavy chain"/>
    <property type="match status" value="1"/>
</dbReference>
<dbReference type="FunFam" id="1.20.5.370:FF:000002">
    <property type="entry name" value="Myosin heavy chain"/>
    <property type="match status" value="1"/>
</dbReference>
<dbReference type="FunFam" id="1.20.5.370:FF:000003">
    <property type="entry name" value="Myosin heavy chain"/>
    <property type="match status" value="1"/>
</dbReference>
<dbReference type="FunFam" id="1.20.5.370:FF:000007">
    <property type="entry name" value="Myosin heavy chain"/>
    <property type="match status" value="1"/>
</dbReference>
<dbReference type="FunFam" id="1.20.5.370:FF:000008">
    <property type="entry name" value="Myosin heavy chain"/>
    <property type="match status" value="1"/>
</dbReference>
<dbReference type="FunFam" id="1.20.5.4820:FF:000001">
    <property type="entry name" value="Myosin heavy chain"/>
    <property type="match status" value="1"/>
</dbReference>
<dbReference type="FunFam" id="1.20.58.530:FF:000001">
    <property type="entry name" value="Myosin heavy chain"/>
    <property type="match status" value="1"/>
</dbReference>
<dbReference type="FunFam" id="2.30.30.360:FF:000001">
    <property type="entry name" value="Myosin heavy chain"/>
    <property type="match status" value="1"/>
</dbReference>
<dbReference type="FunFam" id="3.40.850.10:FF:000024">
    <property type="entry name" value="Myosin heavy chain, isoform J"/>
    <property type="match status" value="1"/>
</dbReference>
<dbReference type="FunFam" id="1.20.120.720:FF:000001">
    <property type="entry name" value="Myosin heavy chain, muscle"/>
    <property type="match status" value="1"/>
</dbReference>
<dbReference type="Gene3D" id="1.10.10.820">
    <property type="match status" value="1"/>
</dbReference>
<dbReference type="Gene3D" id="1.20.5.340">
    <property type="match status" value="5"/>
</dbReference>
<dbReference type="Gene3D" id="1.20.5.370">
    <property type="match status" value="4"/>
</dbReference>
<dbReference type="Gene3D" id="1.20.5.4820">
    <property type="match status" value="1"/>
</dbReference>
<dbReference type="Gene3D" id="1.20.58.530">
    <property type="match status" value="1"/>
</dbReference>
<dbReference type="Gene3D" id="6.10.250.2420">
    <property type="match status" value="1"/>
</dbReference>
<dbReference type="Gene3D" id="3.40.850.10">
    <property type="entry name" value="Kinesin motor domain"/>
    <property type="match status" value="1"/>
</dbReference>
<dbReference type="Gene3D" id="2.30.30.360">
    <property type="entry name" value="Myosin S1 fragment, N-terminal"/>
    <property type="match status" value="1"/>
</dbReference>
<dbReference type="Gene3D" id="1.20.120.720">
    <property type="entry name" value="Myosin VI head, motor domain, U50 subdomain"/>
    <property type="match status" value="1"/>
</dbReference>
<dbReference type="InterPro" id="IPR036961">
    <property type="entry name" value="Kinesin_motor_dom_sf"/>
</dbReference>
<dbReference type="InterPro" id="IPR001609">
    <property type="entry name" value="Myosin_head_motor_dom-like"/>
</dbReference>
<dbReference type="InterPro" id="IPR004009">
    <property type="entry name" value="Myosin_N"/>
</dbReference>
<dbReference type="InterPro" id="IPR008989">
    <property type="entry name" value="Myosin_S1_N"/>
</dbReference>
<dbReference type="InterPro" id="IPR002928">
    <property type="entry name" value="Myosin_tail"/>
</dbReference>
<dbReference type="InterPro" id="IPR027417">
    <property type="entry name" value="P-loop_NTPase"/>
</dbReference>
<dbReference type="InterPro" id="IPR014751">
    <property type="entry name" value="XRCC4-like_C"/>
</dbReference>
<dbReference type="PANTHER" id="PTHR45615">
    <property type="entry name" value="MYOSIN HEAVY CHAIN, NON-MUSCLE"/>
    <property type="match status" value="1"/>
</dbReference>
<dbReference type="PANTHER" id="PTHR45615:SF35">
    <property type="entry name" value="MYOSIN-8"/>
    <property type="match status" value="1"/>
</dbReference>
<dbReference type="Pfam" id="PF00063">
    <property type="entry name" value="Myosin_head"/>
    <property type="match status" value="1"/>
</dbReference>
<dbReference type="Pfam" id="PF02736">
    <property type="entry name" value="Myosin_N"/>
    <property type="match status" value="1"/>
</dbReference>
<dbReference type="Pfam" id="PF01576">
    <property type="entry name" value="Myosin_tail_1"/>
    <property type="match status" value="1"/>
</dbReference>
<dbReference type="PRINTS" id="PR00193">
    <property type="entry name" value="MYOSINHEAVY"/>
</dbReference>
<dbReference type="SMART" id="SM00242">
    <property type="entry name" value="MYSc"/>
    <property type="match status" value="1"/>
</dbReference>
<dbReference type="SUPFAM" id="SSF90257">
    <property type="entry name" value="Myosin rod fragments"/>
    <property type="match status" value="4"/>
</dbReference>
<dbReference type="SUPFAM" id="SSF52540">
    <property type="entry name" value="P-loop containing nucleoside triphosphate hydrolases"/>
    <property type="match status" value="1"/>
</dbReference>
<dbReference type="SUPFAM" id="SSF57997">
    <property type="entry name" value="Tropomyosin"/>
    <property type="match status" value="1"/>
</dbReference>
<dbReference type="PROSITE" id="PS50096">
    <property type="entry name" value="IQ"/>
    <property type="match status" value="1"/>
</dbReference>
<dbReference type="PROSITE" id="PS51456">
    <property type="entry name" value="MYOSIN_MOTOR"/>
    <property type="match status" value="1"/>
</dbReference>
<dbReference type="PROSITE" id="PS51844">
    <property type="entry name" value="SH3_LIKE"/>
    <property type="match status" value="1"/>
</dbReference>
<reference key="1">
    <citation type="journal article" date="1990" name="Gene">
        <title>Generation of a full-length human perinatal myosin heavy-chain-encoding cDNA.</title>
        <authorList>
            <person name="Karsch-Mizrachi I."/>
            <person name="Feghali R."/>
            <person name="Shows T.B. Jr."/>
            <person name="Leinwand L.A."/>
        </authorList>
    </citation>
    <scope>NUCLEOTIDE SEQUENCE [MRNA]</scope>
    <scope>VARIANT GLY-1261</scope>
    <source>
        <tissue>Skeletal muscle</tissue>
    </source>
</reference>
<reference key="2">
    <citation type="journal article" date="1995" name="Eur. J. Biochem.">
        <title>Characterization of a human perinatal myosin heavy-chain transcript.</title>
        <authorList>
            <person name="Jullian E.H."/>
            <person name="Kelly A.M."/>
            <person name="Pompidou A.J."/>
            <person name="Hoffman R."/>
            <person name="Schiaffino S."/>
            <person name="Stedman H.H."/>
            <person name="Rubinstein N.A."/>
        </authorList>
    </citation>
    <scope>NUCLEOTIDE SEQUENCE [MRNA]</scope>
    <source>
        <tissue>Skeletal muscle</tissue>
    </source>
</reference>
<reference key="3">
    <citation type="journal article" date="1990" name="Eur. J. Biochem.">
        <title>Identification of three developmentally controlled isoforms of human myosin heavy chains.</title>
        <authorList>
            <person name="Bober E."/>
            <person name="Buchberger-Seidl A."/>
            <person name="Braun T."/>
            <person name="Singh S."/>
            <person name="Goedde H.W."/>
            <person name="Arnold H.H."/>
        </authorList>
    </citation>
    <scope>NUCLEOTIDE SEQUENCE [MRNA] OF 502-1937</scope>
    <source>
        <tissue>Skeletal muscle</tissue>
    </source>
</reference>
<reference key="4">
    <citation type="journal article" date="1989" name="J. Cell Biol.">
        <title>Molecular genetic characterization of a developmentally regulated human perinatal myosin heavy chain.</title>
        <authorList>
            <person name="Feghali R."/>
            <person name="Leinwand L.A."/>
        </authorList>
    </citation>
    <scope>NUCLEOTIDE SEQUENCE [MRNA] OF 860-1937</scope>
    <scope>VARIANT GLY-1261</scope>
</reference>
<reference key="5">
    <citation type="submission" date="1998-05" db="EMBL/GenBank/DDBJ databases">
        <title>Isolation and characterization of the human perinatal MHC promoter.</title>
        <authorList>
            <person name="Esser K."/>
            <person name="Tidhar A."/>
            <person name="Myszkowski M."/>
        </authorList>
    </citation>
    <scope>NUCLEOTIDE SEQUENCE [GENOMIC DNA] OF 1-46</scope>
</reference>
<reference key="6">
    <citation type="journal article" date="2004" name="N. Engl. J. Med.">
        <title>Mutation of perinatal myosin heavy chain associated with a Carney complex variant.</title>
        <authorList>
            <person name="Veugelers M."/>
            <person name="Bressan M."/>
            <person name="McDermott D.A."/>
            <person name="Weremowicz S."/>
            <person name="Morton C.C."/>
            <person name="Mabry C.C."/>
            <person name="Lefaivre J.-F."/>
            <person name="Zunamon A."/>
            <person name="Destree A."/>
            <person name="Chaudron J.-M."/>
            <person name="Basson C.T."/>
        </authorList>
    </citation>
    <scope>VARIANT CACOV GLN-674</scope>
    <scope>VARIANT DA7 GLN-674</scope>
</reference>
<reference key="7">
    <citation type="journal article" date="2010" name="Am. J. Med. Genet. A">
        <title>Germline mosaicism for the c.2021G &gt; A (p.Arg674Gln) mutation in siblings with trismus pseudocamptodactyly.</title>
        <authorList>
            <person name="Bonapace G."/>
            <person name="Ceravolo F."/>
            <person name="Piccirillo A."/>
            <person name="Duro G."/>
            <person name="Strisciuglio P."/>
            <person name="Concolino D."/>
        </authorList>
    </citation>
    <scope>VARIANT DA7 GLN-674</scope>
</reference>
<comment type="function">
    <text>Muscle contraction.</text>
</comment>
<comment type="subunit">
    <text>Muscle myosin is a hexameric protein that consists of 2 heavy chain subunits (MHC), 2 alkali light chain subunits (MLC) and 2 regulatory light chain subunits (MLC-2).</text>
</comment>
<comment type="subcellular location">
    <subcellularLocation>
        <location>Cytoplasm</location>
        <location>Myofibril</location>
    </subcellularLocation>
    <text>Thick filaments of the myofibrils.</text>
</comment>
<comment type="domain">
    <text>The rodlike tail sequence is highly repetitive, showing cycles of a 28-residue repeat pattern composed of 4 heptapeptides, characteristic for alpha-helical coiled coils.</text>
</comment>
<comment type="domain">
    <text evidence="12">Limited proteolysis of myosin heavy chain produces 1 light meromyosin (LMM) and 1 heavy meromyosin (HMM). HMM can be further cleaved into 2 globular subfragments (S1) and 1 rod-shaped subfragment (S2).</text>
</comment>
<comment type="disease" evidence="8">
    <disease id="DI-01320">
        <name>Carney complex variant</name>
        <acronym>CACOV</acronym>
        <description>Carney complex is a multiple neoplasia syndrome characterized by spotty skin pigmentation, cardiac and other myxomas, endocrine tumors, and psammomatous melanotic schwannomas. Familial cardiac myxomas are associated with spotty pigmentation of the skin and other phenotypes, including primary pigmented nodular adrenocortical dysplasia, extracardiac (frequently cutaneous) myxomas, schwannomas, and pituitary, thyroid, testicular, bone, ovarian, and breast tumors. Cardiac myxomas do not develop in all patients with the Carney complex, but affected patients have at least two features of the complex or one feature and a clinically significant family history.</description>
        <dbReference type="MIM" id="608837"/>
    </disease>
    <text>The disease is caused by variants affecting the gene represented in this entry.</text>
</comment>
<comment type="disease" evidence="8 9">
    <disease id="DI-02392">
        <name>Arthrogryposis, distal, 7</name>
        <acronym>DA7</acronym>
        <description>A form of distal arthrogryposis, a disease characterized by congenital joint contractures that mainly involve two or more distal parts of the limbs, in the absence of a primary neurological or muscle disease. DA7 is characterized by an inability to open the mouth fully (trismus) and pseudocamptodactyly in which wrist dorsiflexion, but not volarflexion, produces involuntary flexion contracture of distal and proximal interphalangeal joints. Additional features include shortened hamstring muscles and short stature.</description>
        <dbReference type="MIM" id="158300"/>
    </disease>
    <text>The disease is caused by variants affecting the gene represented in this entry.</text>
</comment>
<comment type="similarity">
    <text evidence="12">Belongs to the TRAFAC class myosin-kinesin ATPase superfamily. Myosin family.</text>
</comment>
<sequence>MSASSDAEMAVFGEAAPYLRKSEKERIEAQNKPFDAKTSVFVAEPKESYVKSTIQSKEGGKVTVKTEGGATLTVREDQVFPMNPPKYDKIEDMAMMTHLHEPGVLYNLKERYAAWMIYTYSGLFCVTVNPYKWLPVYKPEVVAAYRGKKRQEAPPHIFSISDNAYQFMLTDRENQSILITGESGAGKTVNTKRVIQYFATIAVTGEKKKDESGKMQGTLEDQIISANPLLEAFGNAKTVRNDNSSRFGKFIRIHFGTTGKLASADIETYLLEKSRVTFQLKAERSYHIFYQITSNKKPDLIEMLLITTNPYDYAFVSQGEITVPSIDDQEELMATDSAIDILGFTPEEKVSIYKLTGAVMHYGNMKFKQKQREEQAEPDGTEVADKAAYLQSLNSADLLKALCYPRVKVGNEYVTKGQTVQQVYNAVGALAKAVYEKMFLWMVTRINQQLDTKQPRQYFIGVLDIAGFEIFDFNSLEQLCINFTNEKLQQFFNHHMFVLEQEEYKKEGIEWTFIDFGMDLAACIELIEKPLGIFSILEEECMFPKATDTSFKNKLYDQHLGKSANFQKPKVVKGKAEAHFSLIHYAGTVDYNITGWLDKNKDPLNDTVVGLYQKSAMKTLASLFSTYASAEADSSAKKGAKKKGSSFQTVSALFRENLNKLMTNLRSTHPHFVRCIIPNETKTPGAMEHELVLHQLRCNGVLEGIRICRKGFPSRILYGDFKQRYKVLNASAIPEGQFIDSKKASEKLLASIDIDHTQYKFGHTKVFFKAGLLGLLEEMRDEKLAQIITRTQAVCRGFLMRVEYQKMLQRREALFCIQYNVRAFMNVKHWPWMKLFFKIKPLLKSAETEKEMATMKEEFQKTKDELAKSEAKRKELEEKMVTLLKEKNDLQLQVQSEADSLADAEERCEQLIKNKIQLEAKIKEVTERAEEEEEINAELTAKKRKLEDECSELKKDIDDLELTLAKVEKEKHATENKVKNLTEEMAGLDETIAKLSKEKKALQETHQQTLDDLQAEEDKVNILTKAKTKLEQQVDDLEGSLEQEKKLRMDLERAKRKLEGDLKLAQESTMDMENDKQQLDEKLEKKEFEISNLISKIEDEQAVEIQLQKKIKELQARIEELGEEIEAERASRAKAEKQRSDLSRELEEISERLEEAGGATSAQVELNKKREAEFQKLRRDLEEATLQHEAMVAALRKKHADSMAELGEQIDNLQRVKQKLEKEKSELKMETDDLSSNAEAISKAKGNLEKMCRSLEDQVSELKTKEEEQQRLINDLTAQRARLQTEAGEYSRQLDEKDALVSQLSRSKQASTQQIEELKHQLEEETKAKNALAHALQSSRHDCDLLREQYEEEQEGKAELQRALSKANSEVAQWRTKYETDAIQRTEELEEAKKKLAQRLQEAEEHVEAVNAKCASLEKTKQRLQNEVEDLMLDVERSNAACAALDKKQRNFDKVLSEWKQKYEETQAELEASQKESRSLSTELFKVKNVYEESLDQLETLRRENKNLQQEISDLTEQIAEGGKQIHELEKIKKQVEQEKCEIQAALEEAEASLEHEEGKILRIQLELNQVKSEVDRKIAEKDEEIDQLKRNHTRVVETMQSTLDAEIRSRNDALRVKKKMEGDLNEMEIQLNHANRLAAESLRNYRNTQGILKETQLHLDDALRGQEDLKEQLAIVERRANLLQAEIEELWATLEQTERSRKIAEQELLDASERVQLLHTQNTSLINTKKKLENDVSQLQSEVEEVIQESRNAEEKAKKAITDAAMMAEELKKEQDTSAHLERMKKNLEQTVKDLQHRLDEAEQLALKGGKKQIQKLEARVRELEGEVENEQKRNAEAVKGLRKHERRVKELTYQTEEDRKNVLRLQDLVDKLQAKVKSYKRQAEEAEEQSNANLSKFRKLQHELEEAEERADIAESQVNKLRVKSREVHTKISAE</sequence>
<gene>
    <name type="primary">MYH8</name>
</gene>